<sequence length="1324" mass="140405">MSRRKQAKPQHFQSDPEVASLPRRDGDTEKGQPSRPTKSKDAHVCGRCCAEFFELSDLLLHKKNCTKNQLVLIVNENPASPPETFSPSPPPDNPDEQMNDTVNKTDQVDCSDLSEHNGLDREESMEVEAPVANKSGSGTSSGSHSSTAPSSSSSSSSSSGGGGSSSTGTSAITTSLPQLGDLTTLGNFSVINSNVIIENLQSTKVAVAQFSQEARCGGASGGKLAVPALMEQLLALQQQQIHQLQLIEQIRHQILLLASQNADLPTSSSPSQGTLRTSANPLSTLSSHLSQQLAAAAGLAQSLASQSASISGVKQLPPIQLPQSSSGNTIIPSNSGSSPNMNILAAAVTTPSSEKVASSAGASHVSNPAVSSSSSPAFAISSLLSPASNPLLPQQASANSVFPSPLPNIGTTAEDLNSLSALAQQRKSKPPNVTAFEAKSTSDEAFFKHKCRFCAKVFGSDSALQIHLRSHTGERPFKCNICGNRFSTKGNLKVHFQRHKEKYPHIQMNPYPVPEHLDNIPTSTGIPYGMSIPPEKPVTSWLDTKPVLPTLTTSVGLPLPPTLPSLIPFIKTEEPAPIPISHSATSPPGSVKSDSGGPESATRNLGGLPEEAEGSTLPPSGGKSEESGMVTNSVPTASSSVLSSPAADCGPAGSATTFTNPLLPLMSEQFKAKFPFGGLLDSAQASETSKLQQLVENIDKKATDPNECIICHRVLSCQSALKMHYRTHTGERPFKCKICGRAFTTKGNLKTHYSVHRAMPPLRVQHSCPICQKKFTNAVVLQQHIRMHMGGQIPNTPVPDSYSESMESDTGSFDEKNFDDLDNFSDENMEDCPEGSIPDTPKSADASQDSLSSSPLPLEMSSIAALENQMKMINAGLAEQLQASLKSVENGSIEGDVLTNDSSSVGGDMESQSAGSPAISESTSSMQALSPSNSTQEFHKSPSIEEKPQRAVPSEFANGLSPTPVNGGALDLTSSHAEKIIKEDSLGILFPFRDRGKFKNTACDICGKTFACQSALDIHYRSHTKERPFICTVCNRGFSTKGNLKQHMLTHQMRDLPSQLFEPSSNLGPNQNSAVIPANSLSSLIKTEVNGFVHVSPQDSKDTPTSHVPSGPLSSSATSPVLLPALPRRTPKQHYCNTCGKTFSSSSALQIHERTHTGEKPFACTICGRAFTTKGNLKVHMGTHMWNSTPARRGRRLSVDGPMTFLGGNPVKFPEMFQKDLAARSGSGDPSSFWNQYAAALSNGLAMKANEISVIQNGGIPPIPGSLGSGNSSPVSGLTGNLERLQNSEPNAPLAGLEKMASSENGTNFRFTRFVEDSKEIVTS</sequence>
<feature type="chain" id="PRO_0000047020" description="Sal-like protein 1">
    <location>
        <begin position="1"/>
        <end position="1324"/>
    </location>
</feature>
<feature type="zinc finger region" description="C2H2-type 1; atypical" evidence="11">
    <location>
        <begin position="43"/>
        <end position="65"/>
    </location>
</feature>
<feature type="zinc finger region" description="C2H2-type 2" evidence="2">
    <location>
        <begin position="449"/>
        <end position="471"/>
    </location>
</feature>
<feature type="zinc finger region" description="C2H2-type 3" evidence="2">
    <location>
        <begin position="477"/>
        <end position="499"/>
    </location>
</feature>
<feature type="zinc finger region" description="C2H2-type 4" evidence="2">
    <location>
        <begin position="706"/>
        <end position="728"/>
    </location>
</feature>
<feature type="zinc finger region" description="C2H2-type 5" evidence="2">
    <location>
        <begin position="734"/>
        <end position="756"/>
    </location>
</feature>
<feature type="zinc finger region" description="C2H2-type 6" evidence="2">
    <location>
        <begin position="766"/>
        <end position="788"/>
    </location>
</feature>
<feature type="zinc finger region" description="C2H2-type 7" evidence="2">
    <location>
        <begin position="1001"/>
        <end position="1023"/>
    </location>
</feature>
<feature type="zinc finger region" description="C2H2-type 8" evidence="2">
    <location>
        <begin position="1029"/>
        <end position="1051"/>
    </location>
</feature>
<feature type="zinc finger region" description="C2H2-type 9" evidence="2">
    <location>
        <begin position="1134"/>
        <end position="1156"/>
    </location>
</feature>
<feature type="zinc finger region" description="C2H2-type 10" evidence="2">
    <location>
        <begin position="1162"/>
        <end position="1184"/>
    </location>
</feature>
<feature type="region of interest" description="Disordered" evidence="3">
    <location>
        <begin position="1"/>
        <end position="42"/>
    </location>
</feature>
<feature type="region of interest" description="Disordered" evidence="3">
    <location>
        <begin position="77"/>
        <end position="102"/>
    </location>
</feature>
<feature type="region of interest" description="Disordered" evidence="3">
    <location>
        <begin position="108"/>
        <end position="127"/>
    </location>
</feature>
<feature type="region of interest" description="Disordered" evidence="3">
    <location>
        <begin position="132"/>
        <end position="172"/>
    </location>
</feature>
<feature type="region of interest" description="Disordered" evidence="3">
    <location>
        <begin position="317"/>
        <end position="336"/>
    </location>
</feature>
<feature type="region of interest" description="Disordered" evidence="3">
    <location>
        <begin position="577"/>
        <end position="646"/>
    </location>
</feature>
<feature type="region of interest" description="Disordered" evidence="3">
    <location>
        <begin position="790"/>
        <end position="856"/>
    </location>
</feature>
<feature type="region of interest" description="Disordered" evidence="3">
    <location>
        <begin position="894"/>
        <end position="963"/>
    </location>
</feature>
<feature type="region of interest" description="Disordered" evidence="3">
    <location>
        <begin position="1095"/>
        <end position="1120"/>
    </location>
</feature>
<feature type="compositionally biased region" description="Basic and acidic residues" evidence="3">
    <location>
        <begin position="22"/>
        <end position="42"/>
    </location>
</feature>
<feature type="compositionally biased region" description="Basic and acidic residues" evidence="3">
    <location>
        <begin position="113"/>
        <end position="124"/>
    </location>
</feature>
<feature type="compositionally biased region" description="Low complexity" evidence="3">
    <location>
        <begin position="135"/>
        <end position="158"/>
    </location>
</feature>
<feature type="compositionally biased region" description="Polar residues" evidence="3">
    <location>
        <begin position="321"/>
        <end position="336"/>
    </location>
</feature>
<feature type="compositionally biased region" description="Low complexity" evidence="3">
    <location>
        <begin position="633"/>
        <end position="646"/>
    </location>
</feature>
<feature type="compositionally biased region" description="Polar residues" evidence="3">
    <location>
        <begin position="802"/>
        <end position="811"/>
    </location>
</feature>
<feature type="compositionally biased region" description="Acidic residues" evidence="3">
    <location>
        <begin position="820"/>
        <end position="833"/>
    </location>
</feature>
<feature type="compositionally biased region" description="Low complexity" evidence="3">
    <location>
        <begin position="843"/>
        <end position="856"/>
    </location>
</feature>
<feature type="compositionally biased region" description="Polar residues" evidence="3">
    <location>
        <begin position="899"/>
        <end position="936"/>
    </location>
</feature>
<feature type="compositionally biased region" description="Basic and acidic residues" evidence="3">
    <location>
        <begin position="937"/>
        <end position="949"/>
    </location>
</feature>
<feature type="compositionally biased region" description="Polar residues" evidence="3">
    <location>
        <begin position="1105"/>
        <end position="1119"/>
    </location>
</feature>
<feature type="modified residue" description="Phosphoserine" evidence="1">
    <location>
        <position position="590"/>
    </location>
</feature>
<feature type="modified residue" description="Phosphoserine" evidence="13">
    <location>
        <position position="593"/>
    </location>
</feature>
<feature type="modified residue" description="Phosphoserine" evidence="13">
    <location>
        <position position="595"/>
    </location>
</feature>
<feature type="modified residue" description="Phosphoserine" evidence="13 14">
    <location>
        <position position="941"/>
    </location>
</feature>
<feature type="modified residue" description="Phosphoserine" evidence="13">
    <location>
        <position position="943"/>
    </location>
</feature>
<feature type="cross-link" description="Glycyl lysine isopeptide (Lys-Gly) (interchain with G-Cter in SUMO2)" evidence="15 16">
    <location>
        <position position="439"/>
    </location>
</feature>
<feature type="cross-link" description="Glycyl lysine isopeptide (Lys-Gly) (interchain with G-Cter in SUMO2)" evidence="16">
    <location>
        <position position="673"/>
    </location>
</feature>
<feature type="cross-link" description="Glycyl lysine isopeptide (Lys-Gly) (interchain with G-Cter in SUMO2)" evidence="16">
    <location>
        <position position="690"/>
    </location>
</feature>
<feature type="cross-link" description="Glycyl lysine isopeptide (Lys-Gly) (interchain with G-Cter in SUMO2)" evidence="16">
    <location>
        <position position="701"/>
    </location>
</feature>
<feature type="cross-link" description="Glycyl lysine isopeptide (Lys-Gly) (interchain with G-Cter in SUMO2)" evidence="15 16">
    <location>
        <position position="947"/>
    </location>
</feature>
<feature type="cross-link" description="Glycyl lysine isopeptide (Lys-Gly) (interchain with G-Cter in SUMO2)" evidence="15 16">
    <location>
        <position position="982"/>
    </location>
</feature>
<feature type="cross-link" description="Glycyl lysine isopeptide (Lys-Gly) (interchain with G-Cter in SUMO2)" evidence="16">
    <location>
        <position position="1086"/>
    </location>
</feature>
<feature type="cross-link" description="Glycyl lysine isopeptide (Lys-Gly) (interchain with G-Cter in SUMO2)" evidence="16">
    <location>
        <position position="1219"/>
    </location>
</feature>
<feature type="cross-link" description="Glycyl lysine isopeptide (Lys-Gly) (interchain with G-Cter in SUMO2)" evidence="16">
    <location>
        <position position="1299"/>
    </location>
</feature>
<feature type="cross-link" description="Glycyl lysine isopeptide (Lys-Gly) (interchain with G-Cter in SUMO2)" evidence="16">
    <location>
        <position position="1319"/>
    </location>
</feature>
<feature type="splice variant" id="VSP_040502" description="In isoform 2." evidence="10">
    <location>
        <begin position="1"/>
        <end position="97"/>
    </location>
</feature>
<feature type="sequence variant" id="VAR_013156" evidence="9">
    <original>S</original>
    <variation>SS</variation>
    <location>
        <position position="150"/>
    </location>
</feature>
<feature type="sequence variant" id="VAR_013155" description="In dbSNP:rs113614842." evidence="9">
    <location>
        <position position="150"/>
    </location>
</feature>
<feature type="sequence variant" id="VAR_013157" description="In dbSNP:rs13336129." evidence="9">
    <original>S</original>
    <variation>G</variation>
    <location>
        <position position="159"/>
    </location>
</feature>
<feature type="sequence variant" id="VAR_013158" evidence="4">
    <location>
        <position position="164"/>
    </location>
</feature>
<feature type="sequence variant" id="VAR_013159" description="In dbSNP:rs149302006." evidence="4">
    <original>G</original>
    <variation>E</variation>
    <location>
        <position position="1265"/>
    </location>
</feature>
<feature type="sequence conflict" description="In Ref. 1; CAB41400." evidence="12" ref="1">
    <original>A</original>
    <variation>G</variation>
    <location>
        <position position="79"/>
    </location>
</feature>
<feature type="sequence conflict" description="In Ref. 1; CAB41400/CAB41399." evidence="12" ref="1">
    <original>T</original>
    <variation>S</variation>
    <location>
        <position position="562"/>
    </location>
</feature>
<feature type="sequence conflict" description="In Ref. 1; CAB41400/CAB41399." evidence="12" ref="1">
    <original>V</original>
    <variation>I</variation>
    <location>
        <position position="1275"/>
    </location>
</feature>
<organism>
    <name type="scientific">Homo sapiens</name>
    <name type="common">Human</name>
    <dbReference type="NCBI Taxonomy" id="9606"/>
    <lineage>
        <taxon>Eukaryota</taxon>
        <taxon>Metazoa</taxon>
        <taxon>Chordata</taxon>
        <taxon>Craniata</taxon>
        <taxon>Vertebrata</taxon>
        <taxon>Euteleostomi</taxon>
        <taxon>Mammalia</taxon>
        <taxon>Eutheria</taxon>
        <taxon>Euarchontoglires</taxon>
        <taxon>Primates</taxon>
        <taxon>Haplorrhini</taxon>
        <taxon>Catarrhini</taxon>
        <taxon>Hominidae</taxon>
        <taxon>Homo</taxon>
    </lineage>
</organism>
<keyword id="KW-0025">Alternative splicing</keyword>
<keyword id="KW-0209">Deafness</keyword>
<keyword id="KW-0238">DNA-binding</keyword>
<keyword id="KW-1017">Isopeptide bond</keyword>
<keyword id="KW-0479">Metal-binding</keyword>
<keyword id="KW-0539">Nucleus</keyword>
<keyword id="KW-0597">Phosphoprotein</keyword>
<keyword id="KW-1267">Proteomics identification</keyword>
<keyword id="KW-1185">Reference proteome</keyword>
<keyword id="KW-0677">Repeat</keyword>
<keyword id="KW-0678">Repressor</keyword>
<keyword id="KW-0804">Transcription</keyword>
<keyword id="KW-0805">Transcription regulation</keyword>
<keyword id="KW-0832">Ubl conjugation</keyword>
<keyword id="KW-0862">Zinc</keyword>
<keyword id="KW-0863">Zinc-finger</keyword>
<proteinExistence type="evidence at protein level"/>
<gene>
    <name type="primary">SALL1</name>
    <name type="synonym">SAL1</name>
    <name type="synonym">ZNF794</name>
</gene>
<comment type="function">
    <text evidence="1">Transcriptional repressor involved in organogenesis. Plays an essential role in ureteric bud invasion during kidney development.</text>
</comment>
<comment type="subunit">
    <text evidence="1 6">May associate with NuRD histone deacetylase complex (HDAC) (By similarity). Interacts with components of HDAC complex including HDAC1, HDAC2, RBBP4, RBPP7, MTA1 and MTA2 (By similarity). Interacts with CCNQ (PubMed:18297069). Interacts with NSD2 (via PHD-type zinc fingers 1, 2 and 3) (By similarity).</text>
</comment>
<comment type="interaction">
    <interactant intactId="EBI-11317266">
        <id>Q9NSC2</id>
    </interactant>
    <interactant intactId="EBI-1105153">
        <id>Q96KQ4</id>
        <label>PPP1R13B</label>
    </interactant>
    <organismsDiffer>false</organismsDiffer>
    <experiments>3</experiments>
</comment>
<comment type="subcellular location">
    <subcellularLocation>
        <location evidence="1">Nucleus</location>
    </subcellularLocation>
</comment>
<comment type="alternative products">
    <event type="alternative splicing"/>
    <isoform>
        <id>Q9NSC2-1</id>
        <name>1</name>
        <sequence type="displayed"/>
    </isoform>
    <isoform>
        <id>Q9NSC2-2</id>
        <name>2</name>
        <sequence type="described" ref="VSP_040502"/>
    </isoform>
</comment>
<comment type="tissue specificity">
    <text>Highest levels in kidney. Lower levels in adult brain (enriched in corpus callosum, lower expression in substantia nigra) and liver.</text>
</comment>
<comment type="developmental stage">
    <text>In fetal brain exclusively in neurons of the subependymal region of hypothalamus lateral to the third ventricle.</text>
</comment>
<comment type="disease" evidence="4 8 9">
    <disease id="DI-02376">
        <name>Townes-Brocks syndrome 1</name>
        <acronym>TBS1</acronym>
        <description>A form of Townes-Brocks syndrome, a rare autosomal dominant disease characterized by the triad of imperforate anus, dysplastic ears, and thumb malformations. Minor features of the condition include hearing loss, foot malformations, renal impairment with or without renal malformations, genitourinary malformations, and congenital heart disease.</description>
        <dbReference type="MIM" id="107480"/>
    </disease>
    <text evidence="5 7">The disease is caused by variants affecting the gene represented in this entry. The pathogenic mechanism includes abnormal interactions of mutant SALL1 protein with proteins that control cilium formation and function, resulting in ciliary defects (PubMed:32553112). Some individuals with SALL1 mutations manifest a phenotype overlapping with TBS1 and bronchio-oto-renal syndrome (PubMed:10928856). Clinical features include dysplastic ears, hypoplastic kidneys with impaired renal function, gastroesophageal reflux, hypermetropia, hypospadias, and mild developmental delay (PubMed:10928856). Affected individuals lack the characteristic anal or hand malformations of TBS1 (PubMed:10928856).</text>
</comment>
<comment type="similarity">
    <text evidence="12">Belongs to the sal C2H2-type zinc-finger protein family.</text>
</comment>
<evidence type="ECO:0000250" key="1">
    <source>
        <dbReference type="UniProtKB" id="Q9ER74"/>
    </source>
</evidence>
<evidence type="ECO:0000255" key="2">
    <source>
        <dbReference type="PROSITE-ProRule" id="PRU00042"/>
    </source>
</evidence>
<evidence type="ECO:0000256" key="3">
    <source>
        <dbReference type="SAM" id="MobiDB-lite"/>
    </source>
</evidence>
<evidence type="ECO:0000269" key="4">
    <source>
    </source>
</evidence>
<evidence type="ECO:0000269" key="5">
    <source>
    </source>
</evidence>
<evidence type="ECO:0000269" key="6">
    <source>
    </source>
</evidence>
<evidence type="ECO:0000269" key="7">
    <source>
    </source>
</evidence>
<evidence type="ECO:0000269" key="8">
    <source>
    </source>
</evidence>
<evidence type="ECO:0000269" key="9">
    <source>
    </source>
</evidence>
<evidence type="ECO:0000303" key="10">
    <source>
    </source>
</evidence>
<evidence type="ECO:0000303" key="11">
    <source>
    </source>
</evidence>
<evidence type="ECO:0000305" key="12"/>
<evidence type="ECO:0007744" key="13">
    <source>
    </source>
</evidence>
<evidence type="ECO:0007744" key="14">
    <source>
    </source>
</evidence>
<evidence type="ECO:0007744" key="15">
    <source>
    </source>
</evidence>
<evidence type="ECO:0007744" key="16">
    <source>
    </source>
</evidence>
<dbReference type="EMBL" id="Y18265">
    <property type="protein sequence ID" value="CAB41400.1"/>
    <property type="molecule type" value="mRNA"/>
</dbReference>
<dbReference type="EMBL" id="Y18264">
    <property type="protein sequence ID" value="CAB41399.1"/>
    <property type="molecule type" value="Genomic_DNA"/>
</dbReference>
<dbReference type="EMBL" id="X98833">
    <property type="protein sequence ID" value="CAB41399.1"/>
    <property type="status" value="JOINED"/>
    <property type="molecule type" value="Genomic_DNA"/>
</dbReference>
<dbReference type="EMBL" id="AC009166">
    <property type="status" value="NOT_ANNOTATED_CDS"/>
    <property type="molecule type" value="Genomic_DNA"/>
</dbReference>
<dbReference type="EMBL" id="AK307835">
    <property type="status" value="NOT_ANNOTATED_CDS"/>
    <property type="molecule type" value="mRNA"/>
</dbReference>
<dbReference type="EMBL" id="AF017655">
    <property type="protein sequence ID" value="AAB99908.1"/>
    <property type="molecule type" value="Genomic_DNA"/>
</dbReference>
<dbReference type="EMBL" id="AF074949">
    <property type="protein sequence ID" value="AAF19263.1"/>
    <property type="molecule type" value="Genomic_DNA"/>
</dbReference>
<dbReference type="CCDS" id="CCDS10747.1">
    <molecule id="Q9NSC2-1"/>
</dbReference>
<dbReference type="CCDS" id="CCDS45483.1">
    <molecule id="Q9NSC2-2"/>
</dbReference>
<dbReference type="RefSeq" id="NP_001121364.1">
    <molecule id="Q9NSC2-2"/>
    <property type="nucleotide sequence ID" value="NM_001127892.2"/>
</dbReference>
<dbReference type="RefSeq" id="NP_002959.2">
    <molecule id="Q9NSC2-1"/>
    <property type="nucleotide sequence ID" value="NM_002968.3"/>
</dbReference>
<dbReference type="RefSeq" id="XP_006721304.1">
    <property type="nucleotide sequence ID" value="XM_006721241.3"/>
</dbReference>
<dbReference type="RefSeq" id="XP_011521556.1">
    <property type="nucleotide sequence ID" value="XM_011523254.2"/>
</dbReference>
<dbReference type="RefSeq" id="XP_047290398.1">
    <molecule id="Q9NSC2-1"/>
    <property type="nucleotide sequence ID" value="XM_047434442.1"/>
</dbReference>
<dbReference type="RefSeq" id="XP_047290399.1">
    <molecule id="Q9NSC2-1"/>
    <property type="nucleotide sequence ID" value="XM_047434443.1"/>
</dbReference>
<dbReference type="RefSeq" id="XP_047290400.1">
    <molecule id="Q9NSC2-1"/>
    <property type="nucleotide sequence ID" value="XM_047434444.1"/>
</dbReference>
<dbReference type="BioGRID" id="112206">
    <property type="interactions" value="97"/>
</dbReference>
<dbReference type="ELM" id="Q9NSC2"/>
<dbReference type="FunCoup" id="Q9NSC2">
    <property type="interactions" value="2000"/>
</dbReference>
<dbReference type="IntAct" id="Q9NSC2">
    <property type="interactions" value="55"/>
</dbReference>
<dbReference type="MINT" id="Q9NSC2"/>
<dbReference type="STRING" id="9606.ENSP00000251020"/>
<dbReference type="GlyGen" id="Q9NSC2">
    <property type="glycosylation" value="2 sites, 1 O-linked glycan (1 site)"/>
</dbReference>
<dbReference type="iPTMnet" id="Q9NSC2"/>
<dbReference type="PhosphoSitePlus" id="Q9NSC2"/>
<dbReference type="BioMuta" id="SALL1"/>
<dbReference type="DMDM" id="296452895"/>
<dbReference type="jPOST" id="Q9NSC2"/>
<dbReference type="MassIVE" id="Q9NSC2"/>
<dbReference type="PaxDb" id="9606-ENSP00000251020"/>
<dbReference type="PeptideAtlas" id="Q9NSC2"/>
<dbReference type="ProteomicsDB" id="82527">
    <molecule id="Q9NSC2-1"/>
</dbReference>
<dbReference type="ProteomicsDB" id="82528">
    <molecule id="Q9NSC2-2"/>
</dbReference>
<dbReference type="Pumba" id="Q9NSC2"/>
<dbReference type="Antibodypedia" id="28330">
    <property type="antibodies" value="168 antibodies from 26 providers"/>
</dbReference>
<dbReference type="DNASU" id="6299"/>
<dbReference type="Ensembl" id="ENST00000251020.9">
    <molecule id="Q9NSC2-1"/>
    <property type="protein sequence ID" value="ENSP00000251020.4"/>
    <property type="gene ID" value="ENSG00000103449.13"/>
</dbReference>
<dbReference type="Ensembl" id="ENST00000440970.6">
    <molecule id="Q9NSC2-1"/>
    <property type="protein sequence ID" value="ENSP00000407914.2"/>
    <property type="gene ID" value="ENSG00000103449.13"/>
</dbReference>
<dbReference type="Ensembl" id="ENST00000570206.2">
    <molecule id="Q9NSC2-2"/>
    <property type="protein sequence ID" value="ENSP00000456777.2"/>
    <property type="gene ID" value="ENSG00000103449.13"/>
</dbReference>
<dbReference type="Ensembl" id="ENST00000685868.1">
    <molecule id="Q9NSC2-1"/>
    <property type="protein sequence ID" value="ENSP00000509873.1"/>
    <property type="gene ID" value="ENSG00000103449.13"/>
</dbReference>
<dbReference type="GeneID" id="6299"/>
<dbReference type="KEGG" id="hsa:6299"/>
<dbReference type="MANE-Select" id="ENST00000251020.9">
    <property type="protein sequence ID" value="ENSP00000251020.4"/>
    <property type="RefSeq nucleotide sequence ID" value="NM_002968.3"/>
    <property type="RefSeq protein sequence ID" value="NP_002959.2"/>
</dbReference>
<dbReference type="UCSC" id="uc059ucr.1">
    <molecule id="Q9NSC2-1"/>
    <property type="organism name" value="human"/>
</dbReference>
<dbReference type="AGR" id="HGNC:10524"/>
<dbReference type="CTD" id="6299"/>
<dbReference type="DisGeNET" id="6299"/>
<dbReference type="GeneCards" id="SALL1"/>
<dbReference type="GeneReviews" id="SALL1"/>
<dbReference type="HGNC" id="HGNC:10524">
    <property type="gene designation" value="SALL1"/>
</dbReference>
<dbReference type="HPA" id="ENSG00000103449">
    <property type="expression patterns" value="Tissue enhanced (brain, kidney, liver)"/>
</dbReference>
<dbReference type="MalaCards" id="SALL1"/>
<dbReference type="MIM" id="107480">
    <property type="type" value="phenotype"/>
</dbReference>
<dbReference type="MIM" id="602218">
    <property type="type" value="gene"/>
</dbReference>
<dbReference type="neXtProt" id="NX_Q9NSC2"/>
<dbReference type="OpenTargets" id="ENSG00000103449"/>
<dbReference type="Orphanet" id="857">
    <property type="disease" value="Townes-Brocks syndrome"/>
</dbReference>
<dbReference type="PharmGKB" id="PA34932"/>
<dbReference type="VEuPathDB" id="HostDB:ENSG00000103449"/>
<dbReference type="eggNOG" id="KOG1074">
    <property type="taxonomic scope" value="Eukaryota"/>
</dbReference>
<dbReference type="GeneTree" id="ENSGT00940000155938"/>
<dbReference type="InParanoid" id="Q9NSC2"/>
<dbReference type="OMA" id="QELHKSP"/>
<dbReference type="OrthoDB" id="8749569at2759"/>
<dbReference type="PAN-GO" id="Q9NSC2">
    <property type="GO annotations" value="4 GO annotations based on evolutionary models"/>
</dbReference>
<dbReference type="PhylomeDB" id="Q9NSC2"/>
<dbReference type="TreeFam" id="TF317003"/>
<dbReference type="PathwayCommons" id="Q9NSC2"/>
<dbReference type="Reactome" id="R-HSA-2892247">
    <property type="pathway name" value="POU5F1 (OCT4), SOX2, NANOG activate genes related to proliferation"/>
</dbReference>
<dbReference type="Reactome" id="R-HSA-9830674">
    <property type="pathway name" value="Formation of the ureteric bud"/>
</dbReference>
<dbReference type="SignaLink" id="Q9NSC2"/>
<dbReference type="SIGNOR" id="Q9NSC2"/>
<dbReference type="BioGRID-ORCS" id="6299">
    <property type="hits" value="22 hits in 1173 CRISPR screens"/>
</dbReference>
<dbReference type="GeneWiki" id="SALL1"/>
<dbReference type="GenomeRNAi" id="6299"/>
<dbReference type="Pharos" id="Q9NSC2">
    <property type="development level" value="Tbio"/>
</dbReference>
<dbReference type="PRO" id="PR:Q9NSC2"/>
<dbReference type="Proteomes" id="UP000005640">
    <property type="component" value="Chromosome 16"/>
</dbReference>
<dbReference type="RNAct" id="Q9NSC2">
    <property type="molecule type" value="protein"/>
</dbReference>
<dbReference type="Bgee" id="ENSG00000103449">
    <property type="expression patterns" value="Expressed in ventricular zone and 142 other cell types or tissues"/>
</dbReference>
<dbReference type="ExpressionAtlas" id="Q9NSC2">
    <property type="expression patterns" value="baseline and differential"/>
</dbReference>
<dbReference type="GO" id="GO:0010369">
    <property type="term" value="C:chromocenter"/>
    <property type="evidence" value="ECO:0000314"/>
    <property type="project" value="UniProtKB"/>
</dbReference>
<dbReference type="GO" id="GO:0005737">
    <property type="term" value="C:cytoplasm"/>
    <property type="evidence" value="ECO:0000314"/>
    <property type="project" value="UniProtKB"/>
</dbReference>
<dbReference type="GO" id="GO:0000792">
    <property type="term" value="C:heterochromatin"/>
    <property type="evidence" value="ECO:0000314"/>
    <property type="project" value="UniProtKB"/>
</dbReference>
<dbReference type="GO" id="GO:0005654">
    <property type="term" value="C:nucleoplasm"/>
    <property type="evidence" value="ECO:0000304"/>
    <property type="project" value="Reactome"/>
</dbReference>
<dbReference type="GO" id="GO:0005634">
    <property type="term" value="C:nucleus"/>
    <property type="evidence" value="ECO:0000314"/>
    <property type="project" value="UniProtKB"/>
</dbReference>
<dbReference type="GO" id="GO:0008013">
    <property type="term" value="F:beta-catenin binding"/>
    <property type="evidence" value="ECO:0000314"/>
    <property type="project" value="UniProtKB"/>
</dbReference>
<dbReference type="GO" id="GO:0000981">
    <property type="term" value="F:DNA-binding transcription factor activity, RNA polymerase II-specific"/>
    <property type="evidence" value="ECO:0000318"/>
    <property type="project" value="GO_Central"/>
</dbReference>
<dbReference type="GO" id="GO:0001227">
    <property type="term" value="F:DNA-binding transcription repressor activity, RNA polymerase II-specific"/>
    <property type="evidence" value="ECO:0007669"/>
    <property type="project" value="Ensembl"/>
</dbReference>
<dbReference type="GO" id="GO:0000978">
    <property type="term" value="F:RNA polymerase II cis-regulatory region sequence-specific DNA binding"/>
    <property type="evidence" value="ECO:0007669"/>
    <property type="project" value="Ensembl"/>
</dbReference>
<dbReference type="GO" id="GO:0008270">
    <property type="term" value="F:zinc ion binding"/>
    <property type="evidence" value="ECO:0007669"/>
    <property type="project" value="UniProtKB-KW"/>
</dbReference>
<dbReference type="GO" id="GO:0030325">
    <property type="term" value="P:adrenal gland development"/>
    <property type="evidence" value="ECO:0000270"/>
    <property type="project" value="UniProtKB"/>
</dbReference>
<dbReference type="GO" id="GO:0001658">
    <property type="term" value="P:branching involved in ureteric bud morphogenesis"/>
    <property type="evidence" value="ECO:0000250"/>
    <property type="project" value="UniProtKB"/>
</dbReference>
<dbReference type="GO" id="GO:0048566">
    <property type="term" value="P:embryonic digestive tract development"/>
    <property type="evidence" value="ECO:0000315"/>
    <property type="project" value="UniProtKB"/>
</dbReference>
<dbReference type="GO" id="GO:0042733">
    <property type="term" value="P:embryonic digit morphogenesis"/>
    <property type="evidence" value="ECO:0000315"/>
    <property type="project" value="UniProtKB"/>
</dbReference>
<dbReference type="GO" id="GO:0008406">
    <property type="term" value="P:gonad development"/>
    <property type="evidence" value="ECO:0000270"/>
    <property type="project" value="UniProtKB"/>
</dbReference>
<dbReference type="GO" id="GO:0007507">
    <property type="term" value="P:heart development"/>
    <property type="evidence" value="ECO:0000315"/>
    <property type="project" value="UniProtKB"/>
</dbReference>
<dbReference type="GO" id="GO:0031129">
    <property type="term" value="P:inductive cell-cell signaling"/>
    <property type="evidence" value="ECO:0000250"/>
    <property type="project" value="UniProtKB"/>
</dbReference>
<dbReference type="GO" id="GO:0001822">
    <property type="term" value="P:kidney development"/>
    <property type="evidence" value="ECO:0000315"/>
    <property type="project" value="UniProtKB"/>
</dbReference>
<dbReference type="GO" id="GO:0072073">
    <property type="term" value="P:kidney epithelium development"/>
    <property type="evidence" value="ECO:0000250"/>
    <property type="project" value="UniProtKB"/>
</dbReference>
<dbReference type="GO" id="GO:0060173">
    <property type="term" value="P:limb development"/>
    <property type="evidence" value="ECO:0000315"/>
    <property type="project" value="UniProtKB"/>
</dbReference>
<dbReference type="GO" id="GO:0003337">
    <property type="term" value="P:mesenchymal to epithelial transition involved in metanephros morphogenesis"/>
    <property type="evidence" value="ECO:0000270"/>
    <property type="project" value="UniProtKB"/>
</dbReference>
<dbReference type="GO" id="GO:0045892">
    <property type="term" value="P:negative regulation of DNA-templated transcription"/>
    <property type="evidence" value="ECO:0000314"/>
    <property type="project" value="UniProtKB"/>
</dbReference>
<dbReference type="GO" id="GO:0000122">
    <property type="term" value="P:negative regulation of transcription by RNA polymerase II"/>
    <property type="evidence" value="ECO:0000314"/>
    <property type="project" value="UniProtKB"/>
</dbReference>
<dbReference type="GO" id="GO:0021889">
    <property type="term" value="P:olfactory bulb interneuron differentiation"/>
    <property type="evidence" value="ECO:0000250"/>
    <property type="project" value="UniProtKB"/>
</dbReference>
<dbReference type="GO" id="GO:0061034">
    <property type="term" value="P:olfactory bulb mitral cell layer development"/>
    <property type="evidence" value="ECO:0000315"/>
    <property type="project" value="UniProtKB"/>
</dbReference>
<dbReference type="GO" id="GO:0021553">
    <property type="term" value="P:olfactory nerve development"/>
    <property type="evidence" value="ECO:0000250"/>
    <property type="project" value="UniProtKB"/>
</dbReference>
<dbReference type="GO" id="GO:0021983">
    <property type="term" value="P:pituitary gland development"/>
    <property type="evidence" value="ECO:0000270"/>
    <property type="project" value="UniProtKB"/>
</dbReference>
<dbReference type="GO" id="GO:0045893">
    <property type="term" value="P:positive regulation of DNA-templated transcription"/>
    <property type="evidence" value="ECO:0000314"/>
    <property type="project" value="UniProtKB"/>
</dbReference>
<dbReference type="GO" id="GO:0045944">
    <property type="term" value="P:positive regulation of transcription by RNA polymerase II"/>
    <property type="evidence" value="ECO:0000314"/>
    <property type="project" value="UniProtKB"/>
</dbReference>
<dbReference type="GO" id="GO:0030177">
    <property type="term" value="P:positive regulation of Wnt signaling pathway"/>
    <property type="evidence" value="ECO:0000314"/>
    <property type="project" value="UniProtKB"/>
</dbReference>
<dbReference type="GO" id="GO:0006357">
    <property type="term" value="P:regulation of transcription by RNA polymerase II"/>
    <property type="evidence" value="ECO:0000318"/>
    <property type="project" value="GO_Central"/>
</dbReference>
<dbReference type="GO" id="GO:0001657">
    <property type="term" value="P:ureteric bud development"/>
    <property type="evidence" value="ECO:0000250"/>
    <property type="project" value="UniProtKB"/>
</dbReference>
<dbReference type="GO" id="GO:0072092">
    <property type="term" value="P:ureteric bud invasion"/>
    <property type="evidence" value="ECO:0000250"/>
    <property type="project" value="UniProtKB"/>
</dbReference>
<dbReference type="GO" id="GO:0003281">
    <property type="term" value="P:ventricular septum development"/>
    <property type="evidence" value="ECO:0000250"/>
    <property type="project" value="UniProtKB"/>
</dbReference>
<dbReference type="CDD" id="cd20908">
    <property type="entry name" value="SUF4-like"/>
    <property type="match status" value="1"/>
</dbReference>
<dbReference type="FunFam" id="3.30.160.60:FF:000708">
    <property type="entry name" value="Sal-like protein 1"/>
    <property type="match status" value="1"/>
</dbReference>
<dbReference type="FunFam" id="3.30.160.60:FF:000689">
    <property type="entry name" value="Spalt like transcription factor 1"/>
    <property type="match status" value="1"/>
</dbReference>
<dbReference type="FunFam" id="3.30.160.60:FF:000025">
    <property type="entry name" value="Spalt-like transcription factor 1"/>
    <property type="match status" value="1"/>
</dbReference>
<dbReference type="FunFam" id="3.30.160.60:FF:000260">
    <property type="entry name" value="Spalt-like transcription factor 1"/>
    <property type="match status" value="1"/>
</dbReference>
<dbReference type="FunFam" id="3.30.160.60:FF:000302">
    <property type="entry name" value="Spalt-like transcription factor 1"/>
    <property type="match status" value="1"/>
</dbReference>
<dbReference type="FunFam" id="3.30.160.60:FF:000341">
    <property type="entry name" value="Spalt-like transcription factor 1"/>
    <property type="match status" value="1"/>
</dbReference>
<dbReference type="FunFam" id="3.30.160.60:FF:000079">
    <property type="entry name" value="Spalt-like transcription factor 3"/>
    <property type="match status" value="1"/>
</dbReference>
<dbReference type="FunFam" id="3.30.160.60:FF:000215">
    <property type="entry name" value="Spalt-like transcription factor 3"/>
    <property type="match status" value="1"/>
</dbReference>
<dbReference type="Gene3D" id="3.30.160.60">
    <property type="entry name" value="Classic Zinc Finger"/>
    <property type="match status" value="8"/>
</dbReference>
<dbReference type="InterPro" id="IPR051565">
    <property type="entry name" value="Sal_C2H2-zinc-finger"/>
</dbReference>
<dbReference type="InterPro" id="IPR036236">
    <property type="entry name" value="Znf_C2H2_sf"/>
</dbReference>
<dbReference type="InterPro" id="IPR013087">
    <property type="entry name" value="Znf_C2H2_type"/>
</dbReference>
<dbReference type="PANTHER" id="PTHR23233">
    <property type="entry name" value="SAL-LIKE PROTEIN"/>
    <property type="match status" value="1"/>
</dbReference>
<dbReference type="PANTHER" id="PTHR23233:SF51">
    <property type="entry name" value="SAL-LIKE PROTEIN 1"/>
    <property type="match status" value="1"/>
</dbReference>
<dbReference type="Pfam" id="PF00096">
    <property type="entry name" value="zf-C2H2"/>
    <property type="match status" value="6"/>
</dbReference>
<dbReference type="Pfam" id="PF12874">
    <property type="entry name" value="zf-met"/>
    <property type="match status" value="1"/>
</dbReference>
<dbReference type="SMART" id="SM00355">
    <property type="entry name" value="ZnF_C2H2"/>
    <property type="match status" value="9"/>
</dbReference>
<dbReference type="SUPFAM" id="SSF57667">
    <property type="entry name" value="beta-beta-alpha zinc fingers"/>
    <property type="match status" value="5"/>
</dbReference>
<dbReference type="PROSITE" id="PS00028">
    <property type="entry name" value="ZINC_FINGER_C2H2_1"/>
    <property type="match status" value="9"/>
</dbReference>
<dbReference type="PROSITE" id="PS50157">
    <property type="entry name" value="ZINC_FINGER_C2H2_2"/>
    <property type="match status" value="9"/>
</dbReference>
<protein>
    <recommendedName>
        <fullName>Sal-like protein 1</fullName>
    </recommendedName>
    <alternativeName>
        <fullName>Spalt-like transcription factor 1</fullName>
    </alternativeName>
    <alternativeName>
        <fullName>Zinc finger protein 794</fullName>
    </alternativeName>
    <alternativeName>
        <fullName>Zinc finger protein SALL1</fullName>
    </alternativeName>
    <alternativeName>
        <fullName>Zinc finger protein Spalt-1</fullName>
        <shortName>HSal1</shortName>
        <shortName>Sal-1</shortName>
    </alternativeName>
</protein>
<reference key="1">
    <citation type="journal article" date="1999" name="Am. J. Hum. Genet.">
        <title>Molecular analysis of SALL1 mutations in Townes-Brocks syndrome.</title>
        <authorList>
            <person name="Kohlhase J."/>
            <person name="Taschner P.E.M."/>
            <person name="Burfeind P."/>
            <person name="Pasche B."/>
            <person name="Newman B."/>
            <person name="Blanck C."/>
            <person name="Breuning M.H."/>
            <person name="ten Kate L.P."/>
            <person name="Maaswinkel-Mooy P."/>
            <person name="Mitulla B."/>
            <person name="Seidel J."/>
            <person name="Kirkpatrick S.J."/>
            <person name="Pauli R.M."/>
            <person name="Wargowski D.S."/>
            <person name="Devriendt K."/>
            <person name="Proesmans W."/>
            <person name="Gabrielli O."/>
            <person name="Coppa G.V."/>
            <person name="Wesby-van Swaay E."/>
            <person name="Trembath R.C."/>
            <person name="Schinzel A.A."/>
            <person name="Reardon W."/>
            <person name="Seemanova E."/>
            <person name="Engel W."/>
        </authorList>
    </citation>
    <scope>NUCLEOTIDE SEQUENCE [GENOMIC DNA / MRNA] (ISOFORM 1)</scope>
    <scope>VARIANTS SER-150 DEL; SER-150 INS AND GLY-159</scope>
    <scope>INVOLVEMENT IN TBS1</scope>
</reference>
<reference key="2">
    <citation type="journal article" date="2004" name="Nature">
        <title>The sequence and analysis of duplication-rich human chromosome 16.</title>
        <authorList>
            <person name="Martin J."/>
            <person name="Han C."/>
            <person name="Gordon L.A."/>
            <person name="Terry A."/>
            <person name="Prabhakar S."/>
            <person name="She X."/>
            <person name="Xie G."/>
            <person name="Hellsten U."/>
            <person name="Chan Y.M."/>
            <person name="Altherr M."/>
            <person name="Couronne O."/>
            <person name="Aerts A."/>
            <person name="Bajorek E."/>
            <person name="Black S."/>
            <person name="Blumer H."/>
            <person name="Branscomb E."/>
            <person name="Brown N.C."/>
            <person name="Bruno W.J."/>
            <person name="Buckingham J.M."/>
            <person name="Callen D.F."/>
            <person name="Campbell C.S."/>
            <person name="Campbell M.L."/>
            <person name="Campbell E.W."/>
            <person name="Caoile C."/>
            <person name="Challacombe J.F."/>
            <person name="Chasteen L.A."/>
            <person name="Chertkov O."/>
            <person name="Chi H.C."/>
            <person name="Christensen M."/>
            <person name="Clark L.M."/>
            <person name="Cohn J.D."/>
            <person name="Denys M."/>
            <person name="Detter J.C."/>
            <person name="Dickson M."/>
            <person name="Dimitrijevic-Bussod M."/>
            <person name="Escobar J."/>
            <person name="Fawcett J.J."/>
            <person name="Flowers D."/>
            <person name="Fotopulos D."/>
            <person name="Glavina T."/>
            <person name="Gomez M."/>
            <person name="Gonzales E."/>
            <person name="Goodstein D."/>
            <person name="Goodwin L.A."/>
            <person name="Grady D.L."/>
            <person name="Grigoriev I."/>
            <person name="Groza M."/>
            <person name="Hammon N."/>
            <person name="Hawkins T."/>
            <person name="Haydu L."/>
            <person name="Hildebrand C.E."/>
            <person name="Huang W."/>
            <person name="Israni S."/>
            <person name="Jett J."/>
            <person name="Jewett P.B."/>
            <person name="Kadner K."/>
            <person name="Kimball H."/>
            <person name="Kobayashi A."/>
            <person name="Krawczyk M.-C."/>
            <person name="Leyba T."/>
            <person name="Longmire J.L."/>
            <person name="Lopez F."/>
            <person name="Lou Y."/>
            <person name="Lowry S."/>
            <person name="Ludeman T."/>
            <person name="Manohar C.F."/>
            <person name="Mark G.A."/>
            <person name="McMurray K.L."/>
            <person name="Meincke L.J."/>
            <person name="Morgan J."/>
            <person name="Moyzis R.K."/>
            <person name="Mundt M.O."/>
            <person name="Munk A.C."/>
            <person name="Nandkeshwar R.D."/>
            <person name="Pitluck S."/>
            <person name="Pollard M."/>
            <person name="Predki P."/>
            <person name="Parson-Quintana B."/>
            <person name="Ramirez L."/>
            <person name="Rash S."/>
            <person name="Retterer J."/>
            <person name="Ricke D.O."/>
            <person name="Robinson D.L."/>
            <person name="Rodriguez A."/>
            <person name="Salamov A."/>
            <person name="Saunders E.H."/>
            <person name="Scott D."/>
            <person name="Shough T."/>
            <person name="Stallings R.L."/>
            <person name="Stalvey M."/>
            <person name="Sutherland R.D."/>
            <person name="Tapia R."/>
            <person name="Tesmer J.G."/>
            <person name="Thayer N."/>
            <person name="Thompson L.S."/>
            <person name="Tice H."/>
            <person name="Torney D.C."/>
            <person name="Tran-Gyamfi M."/>
            <person name="Tsai M."/>
            <person name="Ulanovsky L.E."/>
            <person name="Ustaszewska A."/>
            <person name="Vo N."/>
            <person name="White P.S."/>
            <person name="Williams A.L."/>
            <person name="Wills P.L."/>
            <person name="Wu J.-R."/>
            <person name="Wu K."/>
            <person name="Yang J."/>
            <person name="DeJong P."/>
            <person name="Bruce D."/>
            <person name="Doggett N.A."/>
            <person name="Deaven L."/>
            <person name="Schmutz J."/>
            <person name="Grimwood J."/>
            <person name="Richardson P."/>
            <person name="Rokhsar D.S."/>
            <person name="Eichler E.E."/>
            <person name="Gilna P."/>
            <person name="Lucas S.M."/>
            <person name="Myers R.M."/>
            <person name="Rubin E.M."/>
            <person name="Pennacchio L.A."/>
        </authorList>
    </citation>
    <scope>NUCLEOTIDE SEQUENCE [LARGE SCALE GENOMIC DNA]</scope>
</reference>
<reference key="3">
    <citation type="journal article" date="1999" name="Hum. Mutat.">
        <title>Townes-Brocks syndrome: detection of a SALL1 mutation hot spot and evidence for a position effect in one patient.</title>
        <authorList>
            <person name="Marlin S."/>
            <person name="Blanchard S."/>
            <person name="Lacombe D."/>
            <person name="Denoyelle F."/>
            <person name="Alessandri J.-L."/>
            <person name="Calzolari E."/>
            <person name="Drouin-Garraud V."/>
            <person name="Ferraz F.G."/>
            <person name="Fourmaintraux A."/>
            <person name="Philip N."/>
            <person name="Toublanc J.E."/>
            <person name="Petit C."/>
        </authorList>
    </citation>
    <scope>NUCLEOTIDE SEQUENCE [GENOMIC DNA] OF 1-26 (ISOFORM 1)</scope>
    <scope>INVOLVEMENT IN TBS1</scope>
    <scope>VARIANTS SER-164 DEL AND GLU-1265</scope>
</reference>
<reference key="4">
    <citation type="journal article" date="2004" name="Nat. Genet.">
        <title>Complete sequencing and characterization of 21,243 full-length human cDNAs.</title>
        <authorList>
            <person name="Ota T."/>
            <person name="Suzuki Y."/>
            <person name="Nishikawa T."/>
            <person name="Otsuki T."/>
            <person name="Sugiyama T."/>
            <person name="Irie R."/>
            <person name="Wakamatsu A."/>
            <person name="Hayashi K."/>
            <person name="Sato H."/>
            <person name="Nagai K."/>
            <person name="Kimura K."/>
            <person name="Makita H."/>
            <person name="Sekine M."/>
            <person name="Obayashi M."/>
            <person name="Nishi T."/>
            <person name="Shibahara T."/>
            <person name="Tanaka T."/>
            <person name="Ishii S."/>
            <person name="Yamamoto J."/>
            <person name="Saito K."/>
            <person name="Kawai Y."/>
            <person name="Isono Y."/>
            <person name="Nakamura Y."/>
            <person name="Nagahari K."/>
            <person name="Murakami K."/>
            <person name="Yasuda T."/>
            <person name="Iwayanagi T."/>
            <person name="Wagatsuma M."/>
            <person name="Shiratori A."/>
            <person name="Sudo H."/>
            <person name="Hosoiri T."/>
            <person name="Kaku Y."/>
            <person name="Kodaira H."/>
            <person name="Kondo H."/>
            <person name="Sugawara M."/>
            <person name="Takahashi M."/>
            <person name="Kanda K."/>
            <person name="Yokoi T."/>
            <person name="Furuya T."/>
            <person name="Kikkawa E."/>
            <person name="Omura Y."/>
            <person name="Abe K."/>
            <person name="Kamihara K."/>
            <person name="Katsuta N."/>
            <person name="Sato K."/>
            <person name="Tanikawa M."/>
            <person name="Yamazaki M."/>
            <person name="Ninomiya K."/>
            <person name="Ishibashi T."/>
            <person name="Yamashita H."/>
            <person name="Murakawa K."/>
            <person name="Fujimori K."/>
            <person name="Tanai H."/>
            <person name="Kimata M."/>
            <person name="Watanabe M."/>
            <person name="Hiraoka S."/>
            <person name="Chiba Y."/>
            <person name="Ishida S."/>
            <person name="Ono Y."/>
            <person name="Takiguchi S."/>
            <person name="Watanabe S."/>
            <person name="Yosida M."/>
            <person name="Hotuta T."/>
            <person name="Kusano J."/>
            <person name="Kanehori K."/>
            <person name="Takahashi-Fujii A."/>
            <person name="Hara H."/>
            <person name="Tanase T.-O."/>
            <person name="Nomura Y."/>
            <person name="Togiya S."/>
            <person name="Komai F."/>
            <person name="Hara R."/>
            <person name="Takeuchi K."/>
            <person name="Arita M."/>
            <person name="Imose N."/>
            <person name="Musashino K."/>
            <person name="Yuuki H."/>
            <person name="Oshima A."/>
            <person name="Sasaki N."/>
            <person name="Aotsuka S."/>
            <person name="Yoshikawa Y."/>
            <person name="Matsunawa H."/>
            <person name="Ichihara T."/>
            <person name="Shiohata N."/>
            <person name="Sano S."/>
            <person name="Moriya S."/>
            <person name="Momiyama H."/>
            <person name="Satoh N."/>
            <person name="Takami S."/>
            <person name="Terashima Y."/>
            <person name="Suzuki O."/>
            <person name="Nakagawa S."/>
            <person name="Senoh A."/>
            <person name="Mizoguchi H."/>
            <person name="Goto Y."/>
            <person name="Shimizu F."/>
            <person name="Wakebe H."/>
            <person name="Hishigaki H."/>
            <person name="Watanabe T."/>
            <person name="Sugiyama A."/>
            <person name="Takemoto M."/>
            <person name="Kawakami B."/>
            <person name="Yamazaki M."/>
            <person name="Watanabe K."/>
            <person name="Kumagai A."/>
            <person name="Itakura S."/>
            <person name="Fukuzumi Y."/>
            <person name="Fujimori Y."/>
            <person name="Komiyama M."/>
            <person name="Tashiro H."/>
            <person name="Tanigami A."/>
            <person name="Fujiwara T."/>
            <person name="Ono T."/>
            <person name="Yamada K."/>
            <person name="Fujii Y."/>
            <person name="Ozaki K."/>
            <person name="Hirao M."/>
            <person name="Ohmori Y."/>
            <person name="Kawabata A."/>
            <person name="Hikiji T."/>
            <person name="Kobatake N."/>
            <person name="Inagaki H."/>
            <person name="Ikema Y."/>
            <person name="Okamoto S."/>
            <person name="Okitani R."/>
            <person name="Kawakami T."/>
            <person name="Noguchi S."/>
            <person name="Itoh T."/>
            <person name="Shigeta K."/>
            <person name="Senba T."/>
            <person name="Matsumura K."/>
            <person name="Nakajima Y."/>
            <person name="Mizuno T."/>
            <person name="Morinaga M."/>
            <person name="Sasaki M."/>
            <person name="Togashi T."/>
            <person name="Oyama M."/>
            <person name="Hata H."/>
            <person name="Watanabe M."/>
            <person name="Komatsu T."/>
            <person name="Mizushima-Sugano J."/>
            <person name="Satoh T."/>
            <person name="Shirai Y."/>
            <person name="Takahashi Y."/>
            <person name="Nakagawa K."/>
            <person name="Okumura K."/>
            <person name="Nagase T."/>
            <person name="Nomura N."/>
            <person name="Kikuchi H."/>
            <person name="Masuho Y."/>
            <person name="Yamashita R."/>
            <person name="Nakai K."/>
            <person name="Yada T."/>
            <person name="Nakamura Y."/>
            <person name="Ohara O."/>
            <person name="Isogai T."/>
            <person name="Sugano S."/>
        </authorList>
    </citation>
    <scope>NUCLEOTIDE SEQUENCE [LARGE SCALE MRNA] OF 1-1058 (ISOFORM 2)</scope>
</reference>
<reference key="5">
    <citation type="journal article" date="1996" name="Genomics">
        <title>Isolation, characterization, and organ-specific expression of two novel human zinc finger genes related to the Drosophila gene spalt.</title>
        <authorList>
            <person name="Kohlhase J."/>
            <person name="Schuh R."/>
            <person name="Dowe G."/>
            <person name="Kuehnlein R.P."/>
            <person name="Jaeckle H."/>
            <person name="Schroeder B."/>
            <person name="Schulz-Schaeffer W."/>
            <person name="Kretzschmar H.A."/>
            <person name="Koehler A."/>
            <person name="Mueller U."/>
            <person name="Raab-Vetter M."/>
            <person name="Burkhardt E."/>
            <person name="Engel W."/>
            <person name="Stick R."/>
        </authorList>
    </citation>
    <scope>NUCLEOTIDE SEQUENCE [GENOMIC DNA] OF 26-1324 (ISOFORM 1)</scope>
</reference>
<reference key="6">
    <citation type="journal article" date="1998" name="Nat. Genet.">
        <title>Mutations in the SALL1 putative transcription factor gene cause Townes-Brocks syndrome.</title>
        <authorList>
            <person name="Kohlhase J."/>
            <person name="Wischermann A."/>
            <person name="Reichenbach H."/>
            <person name="Froster U."/>
            <person name="Engel W."/>
        </authorList>
    </citation>
    <scope>NUCLEOTIDE SEQUENCE [GENOMIC DNA] OF 313-345 (ISOFORM 1)</scope>
    <scope>INVOLVEMENT IN TBS1</scope>
</reference>
<reference key="7">
    <citation type="journal article" date="2006" name="Dev. Biol.">
        <title>The vertebrate spalt genes in development and disease.</title>
        <authorList>
            <person name="Sweetman D."/>
            <person name="Muensterberg A."/>
        </authorList>
    </citation>
    <scope>DOMAIN</scope>
</reference>
<reference key="8">
    <citation type="journal article" date="2008" name="Nat. Genet.">
        <title>Mutations in the cyclin family member FAM58A cause an X-linked dominant disorder characterized by syndactyly, telecanthus and anogenital and renal malformations.</title>
        <authorList>
            <person name="Unger S."/>
            <person name="Boehm D."/>
            <person name="Kaiser F.J."/>
            <person name="Kaulfuss S."/>
            <person name="Borozdin W."/>
            <person name="Buiting K."/>
            <person name="Burfeind P."/>
            <person name="Boehm J."/>
            <person name="Barrionuevo F."/>
            <person name="Craig A."/>
            <person name="Borowski K."/>
            <person name="Keppler-Noreuil K."/>
            <person name="Schmitt-Mechelke T."/>
            <person name="Steiner B."/>
            <person name="Bartholdi D."/>
            <person name="Lemke J."/>
            <person name="Mortier G."/>
            <person name="Sandford R."/>
            <person name="Zabel B."/>
            <person name="Superti-Furga A."/>
            <person name="Kohlhase J."/>
        </authorList>
    </citation>
    <scope>INTERACTION WITH CCNQ</scope>
</reference>
<reference key="9">
    <citation type="journal article" date="2000" name="J. Med. Genet.">
        <title>A SALL1 mutation causes a branchio-oto-renal syndrome-like phenotype.</title>
        <authorList>
            <person name="Engels S."/>
            <person name="Kohlhase J."/>
            <person name="McGaughran J."/>
        </authorList>
    </citation>
    <scope>DISEASE</scope>
</reference>
<reference key="10">
    <citation type="journal article" date="2011" name="Sci. Signal.">
        <title>System-wide temporal characterization of the proteome and phosphoproteome of human embryonic stem cell differentiation.</title>
        <authorList>
            <person name="Rigbolt K.T."/>
            <person name="Prokhorova T.A."/>
            <person name="Akimov V."/>
            <person name="Henningsen J."/>
            <person name="Johansen P.T."/>
            <person name="Kratchmarova I."/>
            <person name="Kassem M."/>
            <person name="Mann M."/>
            <person name="Olsen J.V."/>
            <person name="Blagoev B."/>
        </authorList>
    </citation>
    <scope>PHOSPHORYLATION [LARGE SCALE ANALYSIS] AT SER-593; SER-595; SER-941 AND SER-943</scope>
    <scope>IDENTIFICATION BY MASS SPECTROMETRY [LARGE SCALE ANALYSIS]</scope>
</reference>
<reference key="11">
    <citation type="journal article" date="2014" name="J. Proteomics">
        <title>An enzyme assisted RP-RPLC approach for in-depth analysis of human liver phosphoproteome.</title>
        <authorList>
            <person name="Bian Y."/>
            <person name="Song C."/>
            <person name="Cheng K."/>
            <person name="Dong M."/>
            <person name="Wang F."/>
            <person name="Huang J."/>
            <person name="Sun D."/>
            <person name="Wang L."/>
            <person name="Ye M."/>
            <person name="Zou H."/>
        </authorList>
    </citation>
    <scope>PHOSPHORYLATION [LARGE SCALE ANALYSIS] AT SER-941</scope>
    <scope>IDENTIFICATION BY MASS SPECTROMETRY [LARGE SCALE ANALYSIS]</scope>
    <source>
        <tissue>Liver</tissue>
    </source>
</reference>
<reference key="12">
    <citation type="journal article" date="2015" name="Mol. Cell. Proteomics">
        <title>System-wide analysis of SUMOylation dynamics in response to replication stress reveals novel small ubiquitin-like modified target proteins and acceptor lysines relevant for genome stability.</title>
        <authorList>
            <person name="Xiao Z."/>
            <person name="Chang J.G."/>
            <person name="Hendriks I.A."/>
            <person name="Sigurdsson J.O."/>
            <person name="Olsen J.V."/>
            <person name="Vertegaal A.C."/>
        </authorList>
    </citation>
    <scope>SUMOYLATION [LARGE SCALE ANALYSIS] AT LYS-439; LYS-947 AND LYS-982</scope>
    <scope>IDENTIFICATION BY MASS SPECTROMETRY [LARGE SCALE ANALYSIS]</scope>
</reference>
<reference key="13">
    <citation type="journal article" date="2017" name="Nat. Struct. Mol. Biol.">
        <title>Site-specific mapping of the human SUMO proteome reveals co-modification with phosphorylation.</title>
        <authorList>
            <person name="Hendriks I.A."/>
            <person name="Lyon D."/>
            <person name="Young C."/>
            <person name="Jensen L.J."/>
            <person name="Vertegaal A.C."/>
            <person name="Nielsen M.L."/>
        </authorList>
    </citation>
    <scope>SUMOYLATION [LARGE SCALE ANALYSIS] AT LYS-439; LYS-673; LYS-690; LYS-701; LYS-947; LYS-982; LYS-1086; LYS-1219; LYS-1299 AND LYS-1319</scope>
    <scope>IDENTIFICATION BY MASS SPECTROMETRY [LARGE SCALE ANALYSIS]</scope>
</reference>
<reference key="14">
    <citation type="journal article" date="2020" name="Elife">
        <title>LUZP1, a novel regulator of primary cilia and the actin cytoskeleton, is a contributing factor in Townes-Brocks Syndrome.</title>
        <authorList>
            <person name="Bozal-Basterra L."/>
            <person name="Gonzalez-Santamarta M."/>
            <person name="Muratore V."/>
            <person name="Bermejo-Arteagabeitia A."/>
            <person name="Da Fonseca C."/>
            <person name="Barroso-Gomila O."/>
            <person name="Azkargorta M."/>
            <person name="Iloro I."/>
            <person name="Pampliega O."/>
            <person name="Andrade R."/>
            <person name="Martin-Martin N."/>
            <person name="Branon T.C."/>
            <person name="Ting A.Y."/>
            <person name="Rodriguez J.A."/>
            <person name="Carracedo A."/>
            <person name="Elortza F."/>
            <person name="Sutherland J.D."/>
            <person name="Barrio R."/>
        </authorList>
    </citation>
    <scope>DISEASE</scope>
</reference>
<name>SALL1_HUMAN</name>
<accession>Q9NSC2</accession>
<accession>Q99881</accession>
<accession>Q9NSC3</accession>
<accession>Q9P1R0</accession>